<proteinExistence type="inferred from homology"/>
<dbReference type="EMBL" id="AE002098">
    <property type="protein sequence ID" value="AAF41020.1"/>
    <property type="molecule type" value="Genomic_DNA"/>
</dbReference>
<dbReference type="PIR" id="E81180">
    <property type="entry name" value="E81180"/>
</dbReference>
<dbReference type="RefSeq" id="NP_273636.1">
    <property type="nucleotide sequence ID" value="NC_003112.2"/>
</dbReference>
<dbReference type="RefSeq" id="WP_002214315.1">
    <property type="nucleotide sequence ID" value="NC_003112.2"/>
</dbReference>
<dbReference type="SMR" id="P66438"/>
<dbReference type="FunCoup" id="P66438">
    <property type="interactions" value="536"/>
</dbReference>
<dbReference type="STRING" id="122586.NMB0592"/>
<dbReference type="PaxDb" id="122586-NMB0592"/>
<dbReference type="GeneID" id="93386578"/>
<dbReference type="KEGG" id="nme:NMB0592"/>
<dbReference type="PATRIC" id="fig|122586.8.peg.754"/>
<dbReference type="HOGENOM" id="CLU_100590_5_1_4"/>
<dbReference type="InParanoid" id="P66438"/>
<dbReference type="OrthoDB" id="9807878at2"/>
<dbReference type="Proteomes" id="UP000000425">
    <property type="component" value="Chromosome"/>
</dbReference>
<dbReference type="GO" id="GO:0005737">
    <property type="term" value="C:cytoplasm"/>
    <property type="evidence" value="ECO:0007669"/>
    <property type="project" value="UniProtKB-ARBA"/>
</dbReference>
<dbReference type="GO" id="GO:0015935">
    <property type="term" value="C:small ribosomal subunit"/>
    <property type="evidence" value="ECO:0000318"/>
    <property type="project" value="GO_Central"/>
</dbReference>
<dbReference type="GO" id="GO:0003735">
    <property type="term" value="F:structural constituent of ribosome"/>
    <property type="evidence" value="ECO:0000318"/>
    <property type="project" value="GO_Central"/>
</dbReference>
<dbReference type="GO" id="GO:0006412">
    <property type="term" value="P:translation"/>
    <property type="evidence" value="ECO:0007669"/>
    <property type="project" value="UniProtKB-UniRule"/>
</dbReference>
<dbReference type="FunFam" id="3.30.1320.10:FF:000001">
    <property type="entry name" value="30S ribosomal protein S16"/>
    <property type="match status" value="1"/>
</dbReference>
<dbReference type="Gene3D" id="3.30.1320.10">
    <property type="match status" value="1"/>
</dbReference>
<dbReference type="HAMAP" id="MF_00385">
    <property type="entry name" value="Ribosomal_bS16"/>
    <property type="match status" value="1"/>
</dbReference>
<dbReference type="InterPro" id="IPR000307">
    <property type="entry name" value="Ribosomal_bS16"/>
</dbReference>
<dbReference type="InterPro" id="IPR023803">
    <property type="entry name" value="Ribosomal_bS16_dom_sf"/>
</dbReference>
<dbReference type="NCBIfam" id="TIGR00002">
    <property type="entry name" value="S16"/>
    <property type="match status" value="1"/>
</dbReference>
<dbReference type="PANTHER" id="PTHR12919">
    <property type="entry name" value="30S RIBOSOMAL PROTEIN S16"/>
    <property type="match status" value="1"/>
</dbReference>
<dbReference type="PANTHER" id="PTHR12919:SF20">
    <property type="entry name" value="SMALL RIBOSOMAL SUBUNIT PROTEIN BS16M"/>
    <property type="match status" value="1"/>
</dbReference>
<dbReference type="Pfam" id="PF00886">
    <property type="entry name" value="Ribosomal_S16"/>
    <property type="match status" value="1"/>
</dbReference>
<dbReference type="SUPFAM" id="SSF54565">
    <property type="entry name" value="Ribosomal protein S16"/>
    <property type="match status" value="1"/>
</dbReference>
<sequence length="81" mass="9292">MVVIRLARGGSKHRPFYNVIVTDSRSRRDGRFIERVGFYNPVANEKQERVRLNADRLNHWIAQGAQVSDSVAKLIKEQKAA</sequence>
<accession>P66438</accession>
<accession>Q9JQP8</accession>
<name>RS16_NEIMB</name>
<reference key="1">
    <citation type="journal article" date="2000" name="Science">
        <title>Complete genome sequence of Neisseria meningitidis serogroup B strain MC58.</title>
        <authorList>
            <person name="Tettelin H."/>
            <person name="Saunders N.J."/>
            <person name="Heidelberg J.F."/>
            <person name="Jeffries A.C."/>
            <person name="Nelson K.E."/>
            <person name="Eisen J.A."/>
            <person name="Ketchum K.A."/>
            <person name="Hood D.W."/>
            <person name="Peden J.F."/>
            <person name="Dodson R.J."/>
            <person name="Nelson W.C."/>
            <person name="Gwinn M.L."/>
            <person name="DeBoy R.T."/>
            <person name="Peterson J.D."/>
            <person name="Hickey E.K."/>
            <person name="Haft D.H."/>
            <person name="Salzberg S.L."/>
            <person name="White O."/>
            <person name="Fleischmann R.D."/>
            <person name="Dougherty B.A."/>
            <person name="Mason T.M."/>
            <person name="Ciecko A."/>
            <person name="Parksey D.S."/>
            <person name="Blair E."/>
            <person name="Cittone H."/>
            <person name="Clark E.B."/>
            <person name="Cotton M.D."/>
            <person name="Utterback T.R."/>
            <person name="Khouri H.M."/>
            <person name="Qin H."/>
            <person name="Vamathevan J.J."/>
            <person name="Gill J."/>
            <person name="Scarlato V."/>
            <person name="Masignani V."/>
            <person name="Pizza M."/>
            <person name="Grandi G."/>
            <person name="Sun L."/>
            <person name="Smith H.O."/>
            <person name="Fraser C.M."/>
            <person name="Moxon E.R."/>
            <person name="Rappuoli R."/>
            <person name="Venter J.C."/>
        </authorList>
    </citation>
    <scope>NUCLEOTIDE SEQUENCE [LARGE SCALE GENOMIC DNA]</scope>
    <source>
        <strain>ATCC BAA-335 / MC58</strain>
    </source>
</reference>
<evidence type="ECO:0000255" key="1">
    <source>
        <dbReference type="HAMAP-Rule" id="MF_00385"/>
    </source>
</evidence>
<evidence type="ECO:0000305" key="2"/>
<keyword id="KW-1185">Reference proteome</keyword>
<keyword id="KW-0687">Ribonucleoprotein</keyword>
<keyword id="KW-0689">Ribosomal protein</keyword>
<organism>
    <name type="scientific">Neisseria meningitidis serogroup B (strain ATCC BAA-335 / MC58)</name>
    <dbReference type="NCBI Taxonomy" id="122586"/>
    <lineage>
        <taxon>Bacteria</taxon>
        <taxon>Pseudomonadati</taxon>
        <taxon>Pseudomonadota</taxon>
        <taxon>Betaproteobacteria</taxon>
        <taxon>Neisseriales</taxon>
        <taxon>Neisseriaceae</taxon>
        <taxon>Neisseria</taxon>
    </lineage>
</organism>
<feature type="chain" id="PRO_0000167216" description="Small ribosomal subunit protein bS16">
    <location>
        <begin position="1"/>
        <end position="81"/>
    </location>
</feature>
<protein>
    <recommendedName>
        <fullName evidence="1">Small ribosomal subunit protein bS16</fullName>
    </recommendedName>
    <alternativeName>
        <fullName evidence="2">30S ribosomal protein S16</fullName>
    </alternativeName>
</protein>
<gene>
    <name evidence="1" type="primary">rpsP</name>
    <name type="ordered locus">NMB0592</name>
</gene>
<comment type="similarity">
    <text evidence="1">Belongs to the bacterial ribosomal protein bS16 family.</text>
</comment>